<comment type="subcellular location">
    <subcellularLocation>
        <location evidence="1">Cell inner membrane</location>
        <topology evidence="1">Multi-pass membrane protein</topology>
    </subcellularLocation>
</comment>
<name>YBAN_ECO57</name>
<accession>P0AAR6</accession>
<accession>P45808</accession>
<accession>P77478</accession>
<organism>
    <name type="scientific">Escherichia coli O157:H7</name>
    <dbReference type="NCBI Taxonomy" id="83334"/>
    <lineage>
        <taxon>Bacteria</taxon>
        <taxon>Pseudomonadati</taxon>
        <taxon>Pseudomonadota</taxon>
        <taxon>Gammaproteobacteria</taxon>
        <taxon>Enterobacterales</taxon>
        <taxon>Enterobacteriaceae</taxon>
        <taxon>Escherichia</taxon>
    </lineage>
</organism>
<evidence type="ECO:0000250" key="1"/>
<evidence type="ECO:0000255" key="2"/>
<gene>
    <name type="primary">ybaN</name>
    <name type="ordered locus">Z0585</name>
    <name type="ordered locus">ECs0521</name>
</gene>
<proteinExistence type="inferred from homology"/>
<sequence length="125" mass="14770">MQRIILIIIGWLAVVLGTLGVVLPVLPTTPFILLAAWCFARSSPRFHAWLLYRSWFGSYLRFWQKHHAMPRGVKPRAILLILLTFAISLWFVQMPWVRIMLLVILACLLFYMWRIPVIDEKQEKH</sequence>
<reference key="1">
    <citation type="journal article" date="2001" name="Nature">
        <title>Genome sequence of enterohaemorrhagic Escherichia coli O157:H7.</title>
        <authorList>
            <person name="Perna N.T."/>
            <person name="Plunkett G. III"/>
            <person name="Burland V."/>
            <person name="Mau B."/>
            <person name="Glasner J.D."/>
            <person name="Rose D.J."/>
            <person name="Mayhew G.F."/>
            <person name="Evans P.S."/>
            <person name="Gregor J."/>
            <person name="Kirkpatrick H.A."/>
            <person name="Posfai G."/>
            <person name="Hackett J."/>
            <person name="Klink S."/>
            <person name="Boutin A."/>
            <person name="Shao Y."/>
            <person name="Miller L."/>
            <person name="Grotbeck E.J."/>
            <person name="Davis N.W."/>
            <person name="Lim A."/>
            <person name="Dimalanta E.T."/>
            <person name="Potamousis K."/>
            <person name="Apodaca J."/>
            <person name="Anantharaman T.S."/>
            <person name="Lin J."/>
            <person name="Yen G."/>
            <person name="Schwartz D.C."/>
            <person name="Welch R.A."/>
            <person name="Blattner F.R."/>
        </authorList>
    </citation>
    <scope>NUCLEOTIDE SEQUENCE [LARGE SCALE GENOMIC DNA]</scope>
    <source>
        <strain>O157:H7 / EDL933 / ATCC 700927 / EHEC</strain>
    </source>
</reference>
<reference key="2">
    <citation type="journal article" date="2001" name="DNA Res.">
        <title>Complete genome sequence of enterohemorrhagic Escherichia coli O157:H7 and genomic comparison with a laboratory strain K-12.</title>
        <authorList>
            <person name="Hayashi T."/>
            <person name="Makino K."/>
            <person name="Ohnishi M."/>
            <person name="Kurokawa K."/>
            <person name="Ishii K."/>
            <person name="Yokoyama K."/>
            <person name="Han C.-G."/>
            <person name="Ohtsubo E."/>
            <person name="Nakayama K."/>
            <person name="Murata T."/>
            <person name="Tanaka M."/>
            <person name="Tobe T."/>
            <person name="Iida T."/>
            <person name="Takami H."/>
            <person name="Honda T."/>
            <person name="Sasakawa C."/>
            <person name="Ogasawara N."/>
            <person name="Yasunaga T."/>
            <person name="Kuhara S."/>
            <person name="Shiba T."/>
            <person name="Hattori M."/>
            <person name="Shinagawa H."/>
        </authorList>
    </citation>
    <scope>NUCLEOTIDE SEQUENCE [LARGE SCALE GENOMIC DNA]</scope>
    <source>
        <strain>O157:H7 / Sakai / RIMD 0509952 / EHEC</strain>
    </source>
</reference>
<feature type="chain" id="PRO_0000168626" description="Inner membrane protein YbaN">
    <location>
        <begin position="1"/>
        <end position="125"/>
    </location>
</feature>
<feature type="topological domain" description="Cytoplasmic" evidence="2">
    <location>
        <begin position="1"/>
        <end position="6"/>
    </location>
</feature>
<feature type="transmembrane region" description="Helical" evidence="2">
    <location>
        <begin position="7"/>
        <end position="26"/>
    </location>
</feature>
<feature type="topological domain" description="Periplasmic" evidence="2">
    <location>
        <begin position="27"/>
        <end position="45"/>
    </location>
</feature>
<feature type="transmembrane region" description="Helical" evidence="2">
    <location>
        <begin position="46"/>
        <end position="63"/>
    </location>
</feature>
<feature type="topological domain" description="Cytoplasmic" evidence="2">
    <location>
        <begin position="64"/>
        <end position="74"/>
    </location>
</feature>
<feature type="transmembrane region" description="Helical" evidence="2">
    <location>
        <begin position="75"/>
        <end position="92"/>
    </location>
</feature>
<feature type="topological domain" description="Periplasmic" evidence="2">
    <location>
        <begin position="93"/>
        <end position="95"/>
    </location>
</feature>
<feature type="transmembrane region" description="Helical" evidence="2">
    <location>
        <begin position="96"/>
        <end position="118"/>
    </location>
</feature>
<feature type="topological domain" description="Cytoplasmic" evidence="2">
    <location>
        <begin position="119"/>
        <end position="125"/>
    </location>
</feature>
<keyword id="KW-0997">Cell inner membrane</keyword>
<keyword id="KW-1003">Cell membrane</keyword>
<keyword id="KW-0472">Membrane</keyword>
<keyword id="KW-1185">Reference proteome</keyword>
<keyword id="KW-0812">Transmembrane</keyword>
<keyword id="KW-1133">Transmembrane helix</keyword>
<protein>
    <recommendedName>
        <fullName>Inner membrane protein YbaN</fullName>
    </recommendedName>
</protein>
<dbReference type="EMBL" id="AE005174">
    <property type="protein sequence ID" value="AAG54817.1"/>
    <property type="molecule type" value="Genomic_DNA"/>
</dbReference>
<dbReference type="EMBL" id="BA000007">
    <property type="protein sequence ID" value="BAB33944.1"/>
    <property type="molecule type" value="Genomic_DNA"/>
</dbReference>
<dbReference type="PIR" id="A90694">
    <property type="entry name" value="A90694"/>
</dbReference>
<dbReference type="PIR" id="E85544">
    <property type="entry name" value="E85544"/>
</dbReference>
<dbReference type="RefSeq" id="NP_308548.1">
    <property type="nucleotide sequence ID" value="NC_002695.1"/>
</dbReference>
<dbReference type="RefSeq" id="WP_001188905.1">
    <property type="nucleotide sequence ID" value="NZ_VOAI01000005.1"/>
</dbReference>
<dbReference type="STRING" id="155864.Z0585"/>
<dbReference type="GeneID" id="914625"/>
<dbReference type="KEGG" id="ece:Z0585"/>
<dbReference type="KEGG" id="ecs:ECs_0521"/>
<dbReference type="PATRIC" id="fig|386585.9.peg.626"/>
<dbReference type="eggNOG" id="COG2832">
    <property type="taxonomic scope" value="Bacteria"/>
</dbReference>
<dbReference type="HOGENOM" id="CLU_113299_1_0_6"/>
<dbReference type="OMA" id="SPRFHDW"/>
<dbReference type="Proteomes" id="UP000000558">
    <property type="component" value="Chromosome"/>
</dbReference>
<dbReference type="Proteomes" id="UP000002519">
    <property type="component" value="Chromosome"/>
</dbReference>
<dbReference type="GO" id="GO:0005886">
    <property type="term" value="C:plasma membrane"/>
    <property type="evidence" value="ECO:0007669"/>
    <property type="project" value="UniProtKB-SubCell"/>
</dbReference>
<dbReference type="InterPro" id="IPR007401">
    <property type="entry name" value="DUF454"/>
</dbReference>
<dbReference type="NCBIfam" id="NF007818">
    <property type="entry name" value="PRK10527.1"/>
    <property type="match status" value="1"/>
</dbReference>
<dbReference type="PANTHER" id="PTHR35813">
    <property type="entry name" value="INNER MEMBRANE PROTEIN YBAN"/>
    <property type="match status" value="1"/>
</dbReference>
<dbReference type="PANTHER" id="PTHR35813:SF1">
    <property type="entry name" value="INNER MEMBRANE PROTEIN YBAN"/>
    <property type="match status" value="1"/>
</dbReference>
<dbReference type="Pfam" id="PF04304">
    <property type="entry name" value="DUF454"/>
    <property type="match status" value="1"/>
</dbReference>
<dbReference type="PIRSF" id="PIRSF016789">
    <property type="entry name" value="DUF454"/>
    <property type="match status" value="1"/>
</dbReference>